<gene>
    <name evidence="5" type="ordered locus">PH0782</name>
</gene>
<dbReference type="EC" id="5.1.1.-" evidence="2"/>
<dbReference type="EC" id="5.1.1.1" evidence="2"/>
<dbReference type="EMBL" id="BA000001">
    <property type="protein sequence ID" value="BAA29874.1"/>
    <property type="molecule type" value="Genomic_DNA"/>
</dbReference>
<dbReference type="PIR" id="H71126">
    <property type="entry name" value="H71126"/>
</dbReference>
<dbReference type="SMR" id="O58478"/>
<dbReference type="STRING" id="70601.gene:9377731"/>
<dbReference type="EnsemblBacteria" id="BAA29874">
    <property type="protein sequence ID" value="BAA29874"/>
    <property type="gene ID" value="BAA29874"/>
</dbReference>
<dbReference type="KEGG" id="pho:PH0782"/>
<dbReference type="eggNOG" id="arCOG00915">
    <property type="taxonomic scope" value="Archaea"/>
</dbReference>
<dbReference type="SABIO-RK" id="O58478"/>
<dbReference type="Proteomes" id="UP000000752">
    <property type="component" value="Chromosome"/>
</dbReference>
<dbReference type="GO" id="GO:0008784">
    <property type="term" value="F:alanine racemase activity"/>
    <property type="evidence" value="ECO:0007669"/>
    <property type="project" value="UniProtKB-EC"/>
</dbReference>
<dbReference type="GO" id="GO:0042802">
    <property type="term" value="F:identical protein binding"/>
    <property type="evidence" value="ECO:0007669"/>
    <property type="project" value="TreeGrafter"/>
</dbReference>
<dbReference type="GO" id="GO:0030170">
    <property type="term" value="F:pyridoxal phosphate binding"/>
    <property type="evidence" value="ECO:0007669"/>
    <property type="project" value="InterPro"/>
</dbReference>
<dbReference type="GO" id="GO:0030378">
    <property type="term" value="F:serine racemase activity"/>
    <property type="evidence" value="ECO:0007669"/>
    <property type="project" value="RHEA"/>
</dbReference>
<dbReference type="GO" id="GO:0008483">
    <property type="term" value="F:transaminase activity"/>
    <property type="evidence" value="ECO:0007669"/>
    <property type="project" value="InterPro"/>
</dbReference>
<dbReference type="CDD" id="cd00610">
    <property type="entry name" value="OAT_like"/>
    <property type="match status" value="1"/>
</dbReference>
<dbReference type="Gene3D" id="3.90.1150.10">
    <property type="entry name" value="Aspartate Aminotransferase, domain 1"/>
    <property type="match status" value="1"/>
</dbReference>
<dbReference type="Gene3D" id="3.40.640.10">
    <property type="entry name" value="Type I PLP-dependent aspartate aminotransferase-like (Major domain)"/>
    <property type="match status" value="1"/>
</dbReference>
<dbReference type="InterPro" id="IPR005814">
    <property type="entry name" value="Aminotrans_3"/>
</dbReference>
<dbReference type="InterPro" id="IPR049704">
    <property type="entry name" value="Aminotrans_3_PPA_site"/>
</dbReference>
<dbReference type="InterPro" id="IPR050103">
    <property type="entry name" value="Class-III_PLP-dep_AT"/>
</dbReference>
<dbReference type="InterPro" id="IPR015424">
    <property type="entry name" value="PyrdxlP-dep_Trfase"/>
</dbReference>
<dbReference type="InterPro" id="IPR015421">
    <property type="entry name" value="PyrdxlP-dep_Trfase_major"/>
</dbReference>
<dbReference type="InterPro" id="IPR015422">
    <property type="entry name" value="PyrdxlP-dep_Trfase_small"/>
</dbReference>
<dbReference type="NCBIfam" id="NF004171">
    <property type="entry name" value="PRK05639.1"/>
    <property type="match status" value="1"/>
</dbReference>
<dbReference type="PANTHER" id="PTHR11986">
    <property type="entry name" value="AMINOTRANSFERASE CLASS III"/>
    <property type="match status" value="1"/>
</dbReference>
<dbReference type="PANTHER" id="PTHR11986:SF58">
    <property type="entry name" value="LEUCINE_METHIONINE RACEMASE"/>
    <property type="match status" value="1"/>
</dbReference>
<dbReference type="Pfam" id="PF00202">
    <property type="entry name" value="Aminotran_3"/>
    <property type="match status" value="1"/>
</dbReference>
<dbReference type="PIRSF" id="PIRSF000521">
    <property type="entry name" value="Transaminase_4ab_Lys_Orn"/>
    <property type="match status" value="1"/>
</dbReference>
<dbReference type="SUPFAM" id="SSF53383">
    <property type="entry name" value="PLP-dependent transferases"/>
    <property type="match status" value="1"/>
</dbReference>
<dbReference type="PROSITE" id="PS00600">
    <property type="entry name" value="AA_TRANSFER_CLASS_3"/>
    <property type="match status" value="1"/>
</dbReference>
<comment type="function">
    <text evidence="2">Catalyzes the interconversion of L-alanine and D-alanine, and L-serine and D-serine. Has weak activity with valine and threonine.</text>
</comment>
<comment type="catalytic activity">
    <reaction evidence="2">
        <text>L-alanine = D-alanine</text>
        <dbReference type="Rhea" id="RHEA:20249"/>
        <dbReference type="ChEBI" id="CHEBI:57416"/>
        <dbReference type="ChEBI" id="CHEBI:57972"/>
        <dbReference type="EC" id="5.1.1.1"/>
    </reaction>
</comment>
<comment type="catalytic activity">
    <reaction evidence="2">
        <text>L-serine = D-serine</text>
        <dbReference type="Rhea" id="RHEA:10980"/>
        <dbReference type="ChEBI" id="CHEBI:33384"/>
        <dbReference type="ChEBI" id="CHEBI:35247"/>
    </reaction>
</comment>
<comment type="cofactor">
    <cofactor evidence="2">
        <name>pyridoxal 5'-phosphate</name>
        <dbReference type="ChEBI" id="CHEBI:597326"/>
    </cofactor>
</comment>
<comment type="activity regulation">
    <text evidence="2">Completely inhibited by hydroxylamine hydrochloride.</text>
</comment>
<comment type="biophysicochemical properties">
    <kinetics>
        <KM evidence="2">3.3 mM for L-alanine</KM>
        <KM evidence="2">4.5 mM for L-serine</KM>
        <KM evidence="2">5.5 mM for D-alanine</KM>
        <KM evidence="2">5.9 mM for D-serine</KM>
        <Vmax evidence="2">28.2 umol/min/mg enzyme with L-alanine as substrate</Vmax>
        <Vmax evidence="2">31.4 umol/min/mg enzyme with L-serine as substrate</Vmax>
        <Vmax evidence="2">49.5 umol/min/mg enzyme with D-alanine as substrate</Vmax>
        <Vmax evidence="2">41.2 umol/min/mg enzyme with D-serine as substrate</Vmax>
    </kinetics>
    <phDependence>
        <text evidence="2">Optimum pH is 6.5-7.0.</text>
    </phDependence>
    <temperatureDependence>
        <text evidence="2">Highly stable at high temperatures.</text>
    </temperatureDependence>
</comment>
<comment type="subunit">
    <text evidence="2">Homohexamer.</text>
</comment>
<comment type="similarity">
    <text evidence="4">Belongs to the class-III pyridoxal-phosphate-dependent aminotransferase family.</text>
</comment>
<accession>O58478</accession>
<name>ASRAC_PYRHO</name>
<proteinExistence type="evidence at protein level"/>
<keyword id="KW-0413">Isomerase</keyword>
<keyword id="KW-0663">Pyridoxal phosphate</keyword>
<feature type="chain" id="PRO_0000448757" description="Alanine/serine racemase">
    <location>
        <begin position="1"/>
        <end position="474"/>
    </location>
</feature>
<feature type="binding site" evidence="1">
    <location>
        <begin position="139"/>
        <end position="140"/>
    </location>
    <ligand>
        <name>pyridoxal 5'-phosphate</name>
        <dbReference type="ChEBI" id="CHEBI:597326"/>
    </ligand>
</feature>
<feature type="binding site" evidence="1">
    <location>
        <position position="282"/>
    </location>
    <ligand>
        <name>pyridoxal 5'-phosphate</name>
        <dbReference type="ChEBI" id="CHEBI:597326"/>
    </ligand>
</feature>
<feature type="binding site" evidence="1">
    <location>
        <position position="336"/>
    </location>
    <ligand>
        <name>pyridoxal 5'-phosphate</name>
        <dbReference type="ChEBI" id="CHEBI:597326"/>
    </ligand>
</feature>
<feature type="modified residue" description="N6-(pyridoxal phosphate)lysine" evidence="1">
    <location>
        <position position="308"/>
    </location>
</feature>
<feature type="mutagenesis site" description="Loss of activity." evidence="2">
    <original>D</original>
    <variation>A</variation>
    <location>
        <position position="251"/>
    </location>
</feature>
<feature type="mutagenesis site" description="Loss of activity." evidence="2">
    <original>K</original>
    <variation>A</variation>
    <location>
        <position position="308"/>
    </location>
</feature>
<reference key="1">
    <citation type="journal article" date="1998" name="DNA Res.">
        <title>Complete sequence and gene organization of the genome of a hyper-thermophilic archaebacterium, Pyrococcus horikoshii OT3.</title>
        <authorList>
            <person name="Kawarabayasi Y."/>
            <person name="Sawada M."/>
            <person name="Horikawa H."/>
            <person name="Haikawa Y."/>
            <person name="Hino Y."/>
            <person name="Yamamoto S."/>
            <person name="Sekine M."/>
            <person name="Baba S."/>
            <person name="Kosugi H."/>
            <person name="Hosoyama A."/>
            <person name="Nagai Y."/>
            <person name="Sakai M."/>
            <person name="Ogura K."/>
            <person name="Otsuka R."/>
            <person name="Nakazawa H."/>
            <person name="Takamiya M."/>
            <person name="Ohfuku Y."/>
            <person name="Funahashi T."/>
            <person name="Tanaka T."/>
            <person name="Kudoh Y."/>
            <person name="Yamazaki J."/>
            <person name="Kushida N."/>
            <person name="Oguchi A."/>
            <person name="Aoki K."/>
            <person name="Yoshizawa T."/>
            <person name="Nakamura Y."/>
            <person name="Robb F.T."/>
            <person name="Horikoshi K."/>
            <person name="Masuchi Y."/>
            <person name="Shizuya H."/>
            <person name="Kikuchi H."/>
        </authorList>
    </citation>
    <scope>NUCLEOTIDE SEQUENCE [LARGE SCALE GENOMIC DNA]</scope>
    <source>
        <strain>ATCC 700860 / DSM 12428 / JCM 9974 / NBRC 100139 / OT-3</strain>
    </source>
</reference>
<reference key="2">
    <citation type="journal article" date="2018" name="Front. Microbiol.">
        <title>A novel PLP-dependent alanine/serine racemase from the hyperthermophilic archaeon Pyrococcus horikoshii OT-3.</title>
        <authorList>
            <person name="Kawakami R."/>
            <person name="Ohshida T."/>
            <person name="Sakuraba H."/>
            <person name="Ohshima T."/>
        </authorList>
    </citation>
    <scope>FUNCTION</scope>
    <scope>CATALYTIC ACTIVITY</scope>
    <scope>BIOPHYSICOCHEMICAL PROPERTIES</scope>
    <scope>ACTIVITY REGULATION</scope>
    <scope>COFACTOR</scope>
    <scope>SUBUNIT</scope>
    <scope>MUTAGENESIS OF ASP-251 AND LYS-308</scope>
</reference>
<evidence type="ECO:0000250" key="1">
    <source>
        <dbReference type="UniProtKB" id="P22256"/>
    </source>
</evidence>
<evidence type="ECO:0000269" key="2">
    <source>
    </source>
</evidence>
<evidence type="ECO:0000303" key="3">
    <source>
    </source>
</evidence>
<evidence type="ECO:0000305" key="4"/>
<evidence type="ECO:0000312" key="5">
    <source>
        <dbReference type="EMBL" id="BAA29874.1"/>
    </source>
</evidence>
<sequence>MPFLPFSYYPFSLEVILMEYPKIVVKPPGPRAKELIEREKKVLSTGIGVKLFPLVPKRGFGPFIEDVDGNVFIDFLAGAAAASTGYAHPKLVKAVKEQVELIQHSMIGYTHSERAIRVAEKLVEISPIENSKVIFGLSGSDAVDMAIKVSKFSTRRPWILAFIGAYHGQTLGATSVASFQVSQKRGYSPLMPNVFWIPYPNPFRNIWGINGYEEPDELINRVLDYLEYYVFSHVVPPDEVAALFAEPIQGDAGIVVPPENFFKELKKLLEEYGILLVMDEVQTGIGRTGKWFASEWFNVKPDMIIFGKGVASGMGLSGVIGRKEIMDITSGSALLTPAANPVISAAAEATLEIIEEENLLKNALEVGEFIMGRLKEIKERFEIIGDVRGKGLMIGVEIVKENGRPDPEMTGKICWRAFELGLILPSYGMFGNVIRITPPLVLTKEVAEKALEIIERAIKDTLTGKVERKVVTWH</sequence>
<protein>
    <recommendedName>
        <fullName evidence="3">Alanine/serine racemase</fullName>
        <shortName evidence="3">ASR</shortName>
        <shortName evidence="3">Ala/Ser racemase</shortName>
        <ecNumber evidence="2">5.1.1.-</ecNumber>
        <ecNumber evidence="2">5.1.1.1</ecNumber>
    </recommendedName>
</protein>
<organism>
    <name type="scientific">Pyrococcus horikoshii (strain ATCC 700860 / DSM 12428 / JCM 9974 / NBRC 100139 / OT-3)</name>
    <dbReference type="NCBI Taxonomy" id="70601"/>
    <lineage>
        <taxon>Archaea</taxon>
        <taxon>Methanobacteriati</taxon>
        <taxon>Methanobacteriota</taxon>
        <taxon>Thermococci</taxon>
        <taxon>Thermococcales</taxon>
        <taxon>Thermococcaceae</taxon>
        <taxon>Pyrococcus</taxon>
    </lineage>
</organism>